<evidence type="ECO:0000255" key="1">
    <source>
        <dbReference type="HAMAP-Rule" id="MF_00300"/>
    </source>
</evidence>
<sequence>MSNSLGKLFQITSFGESHGDCVGVVIDGVPAGLAINVDEIQVEVDKRKSRAKAHATPRCEDDRIEIFSGILNNFTTGAPICLVIWNKNIDSSEYERTRSKIRPGHADFTGFVKYGGFNDFRGGGRFSGRITAGHVMAGAIARKLISTIGIEVIGYTAELGGIVAKLPKTKDIRQNISQSDVNCPDLTATKKMLALIQQAAEEGDSLGGVVECLGLNLPVGLGEPVFDTLEGELAKAMFAIPAVKGVEFGAGFEASRLRGSKNNDPFSIQANHIRTTSNKCGGVLGGISDGMPLQFRVAVKPTPSISLSQPTVNIDTMTNTSLEIRGRHDTCIVPRAVSVVEAMTCIVLADLALRAGMIPRVIKQ</sequence>
<organism>
    <name type="scientific">Dehalococcoides mccartyi (strain ATCC BAA-2266 / KCTC 15142 / 195)</name>
    <name type="common">Dehalococcoides ethenogenes (strain 195)</name>
    <dbReference type="NCBI Taxonomy" id="243164"/>
    <lineage>
        <taxon>Bacteria</taxon>
        <taxon>Bacillati</taxon>
        <taxon>Chloroflexota</taxon>
        <taxon>Dehalococcoidia</taxon>
        <taxon>Dehalococcoidales</taxon>
        <taxon>Dehalococcoidaceae</taxon>
        <taxon>Dehalococcoides</taxon>
    </lineage>
</organism>
<proteinExistence type="inferred from homology"/>
<accession>Q3Z993</accession>
<protein>
    <recommendedName>
        <fullName evidence="1">Chorismate synthase</fullName>
        <shortName evidence="1">CS</shortName>
        <ecNumber evidence="1">4.2.3.5</ecNumber>
    </recommendedName>
    <alternativeName>
        <fullName evidence="1">5-enolpyruvylshikimate-3-phosphate phospholyase</fullName>
    </alternativeName>
</protein>
<name>AROC_DEHM1</name>
<gene>
    <name evidence="1" type="primary">aroC</name>
    <name type="ordered locus">DET0462</name>
</gene>
<dbReference type="EC" id="4.2.3.5" evidence="1"/>
<dbReference type="EMBL" id="CP000027">
    <property type="protein sequence ID" value="AAW40217.1"/>
    <property type="molecule type" value="Genomic_DNA"/>
</dbReference>
<dbReference type="RefSeq" id="WP_010936239.1">
    <property type="nucleotide sequence ID" value="NC_002936.3"/>
</dbReference>
<dbReference type="SMR" id="Q3Z993"/>
<dbReference type="FunCoup" id="Q3Z993">
    <property type="interactions" value="326"/>
</dbReference>
<dbReference type="STRING" id="243164.DET0462"/>
<dbReference type="GeneID" id="3230181"/>
<dbReference type="KEGG" id="det:DET0462"/>
<dbReference type="PATRIC" id="fig|243164.10.peg.440"/>
<dbReference type="eggNOG" id="COG0082">
    <property type="taxonomic scope" value="Bacteria"/>
</dbReference>
<dbReference type="HOGENOM" id="CLU_034547_0_0_0"/>
<dbReference type="InParanoid" id="Q3Z993"/>
<dbReference type="UniPathway" id="UPA00053">
    <property type="reaction ID" value="UER00090"/>
</dbReference>
<dbReference type="Proteomes" id="UP000008289">
    <property type="component" value="Chromosome"/>
</dbReference>
<dbReference type="GO" id="GO:0005829">
    <property type="term" value="C:cytosol"/>
    <property type="evidence" value="ECO:0007669"/>
    <property type="project" value="TreeGrafter"/>
</dbReference>
<dbReference type="GO" id="GO:0004107">
    <property type="term" value="F:chorismate synthase activity"/>
    <property type="evidence" value="ECO:0007669"/>
    <property type="project" value="UniProtKB-UniRule"/>
</dbReference>
<dbReference type="GO" id="GO:0010181">
    <property type="term" value="F:FMN binding"/>
    <property type="evidence" value="ECO:0007669"/>
    <property type="project" value="TreeGrafter"/>
</dbReference>
<dbReference type="GO" id="GO:0008652">
    <property type="term" value="P:amino acid biosynthetic process"/>
    <property type="evidence" value="ECO:0007669"/>
    <property type="project" value="UniProtKB-KW"/>
</dbReference>
<dbReference type="GO" id="GO:0009073">
    <property type="term" value="P:aromatic amino acid family biosynthetic process"/>
    <property type="evidence" value="ECO:0007669"/>
    <property type="project" value="UniProtKB-KW"/>
</dbReference>
<dbReference type="GO" id="GO:0009423">
    <property type="term" value="P:chorismate biosynthetic process"/>
    <property type="evidence" value="ECO:0007669"/>
    <property type="project" value="UniProtKB-UniRule"/>
</dbReference>
<dbReference type="CDD" id="cd07304">
    <property type="entry name" value="Chorismate_synthase"/>
    <property type="match status" value="1"/>
</dbReference>
<dbReference type="Gene3D" id="3.60.150.10">
    <property type="entry name" value="Chorismate synthase AroC"/>
    <property type="match status" value="1"/>
</dbReference>
<dbReference type="HAMAP" id="MF_00300">
    <property type="entry name" value="Chorismate_synth"/>
    <property type="match status" value="1"/>
</dbReference>
<dbReference type="InterPro" id="IPR000453">
    <property type="entry name" value="Chorismate_synth"/>
</dbReference>
<dbReference type="InterPro" id="IPR035904">
    <property type="entry name" value="Chorismate_synth_AroC_sf"/>
</dbReference>
<dbReference type="InterPro" id="IPR020541">
    <property type="entry name" value="Chorismate_synthase_CS"/>
</dbReference>
<dbReference type="NCBIfam" id="TIGR00033">
    <property type="entry name" value="aroC"/>
    <property type="match status" value="1"/>
</dbReference>
<dbReference type="NCBIfam" id="NF003793">
    <property type="entry name" value="PRK05382.1"/>
    <property type="match status" value="1"/>
</dbReference>
<dbReference type="PANTHER" id="PTHR21085">
    <property type="entry name" value="CHORISMATE SYNTHASE"/>
    <property type="match status" value="1"/>
</dbReference>
<dbReference type="PANTHER" id="PTHR21085:SF0">
    <property type="entry name" value="CHORISMATE SYNTHASE"/>
    <property type="match status" value="1"/>
</dbReference>
<dbReference type="Pfam" id="PF01264">
    <property type="entry name" value="Chorismate_synt"/>
    <property type="match status" value="1"/>
</dbReference>
<dbReference type="PIRSF" id="PIRSF001456">
    <property type="entry name" value="Chorismate_synth"/>
    <property type="match status" value="1"/>
</dbReference>
<dbReference type="SUPFAM" id="SSF103263">
    <property type="entry name" value="Chorismate synthase, AroC"/>
    <property type="match status" value="1"/>
</dbReference>
<dbReference type="PROSITE" id="PS00787">
    <property type="entry name" value="CHORISMATE_SYNTHASE_1"/>
    <property type="match status" value="1"/>
</dbReference>
<dbReference type="PROSITE" id="PS00788">
    <property type="entry name" value="CHORISMATE_SYNTHASE_2"/>
    <property type="match status" value="1"/>
</dbReference>
<comment type="function">
    <text evidence="1">Catalyzes the anti-1,4-elimination of the C-3 phosphate and the C-6 proR hydrogen from 5-enolpyruvylshikimate-3-phosphate (EPSP) to yield chorismate, which is the branch point compound that serves as the starting substrate for the three terminal pathways of aromatic amino acid biosynthesis. This reaction introduces a second double bond into the aromatic ring system.</text>
</comment>
<comment type="catalytic activity">
    <reaction evidence="1">
        <text>5-O-(1-carboxyvinyl)-3-phosphoshikimate = chorismate + phosphate</text>
        <dbReference type="Rhea" id="RHEA:21020"/>
        <dbReference type="ChEBI" id="CHEBI:29748"/>
        <dbReference type="ChEBI" id="CHEBI:43474"/>
        <dbReference type="ChEBI" id="CHEBI:57701"/>
        <dbReference type="EC" id="4.2.3.5"/>
    </reaction>
</comment>
<comment type="cofactor">
    <cofactor evidence="1">
        <name>FMNH2</name>
        <dbReference type="ChEBI" id="CHEBI:57618"/>
    </cofactor>
    <text evidence="1">Reduced FMN (FMNH(2)).</text>
</comment>
<comment type="pathway">
    <text evidence="1">Metabolic intermediate biosynthesis; chorismate biosynthesis; chorismate from D-erythrose 4-phosphate and phosphoenolpyruvate: step 7/7.</text>
</comment>
<comment type="subunit">
    <text evidence="1">Homotetramer.</text>
</comment>
<comment type="similarity">
    <text evidence="1">Belongs to the chorismate synthase family.</text>
</comment>
<reference key="1">
    <citation type="journal article" date="2005" name="Science">
        <title>Genome sequence of the PCE-dechlorinating bacterium Dehalococcoides ethenogenes.</title>
        <authorList>
            <person name="Seshadri R."/>
            <person name="Adrian L."/>
            <person name="Fouts D.E."/>
            <person name="Eisen J.A."/>
            <person name="Phillippy A.M."/>
            <person name="Methe B.A."/>
            <person name="Ward N.L."/>
            <person name="Nelson W.C."/>
            <person name="DeBoy R.T."/>
            <person name="Khouri H.M."/>
            <person name="Kolonay J.F."/>
            <person name="Dodson R.J."/>
            <person name="Daugherty S.C."/>
            <person name="Brinkac L.M."/>
            <person name="Sullivan S.A."/>
            <person name="Madupu R."/>
            <person name="Nelson K.E."/>
            <person name="Kang K.H."/>
            <person name="Impraim M."/>
            <person name="Tran K."/>
            <person name="Robinson J.M."/>
            <person name="Forberger H.A."/>
            <person name="Fraser C.M."/>
            <person name="Zinder S.H."/>
            <person name="Heidelberg J.F."/>
        </authorList>
    </citation>
    <scope>NUCLEOTIDE SEQUENCE [LARGE SCALE GENOMIC DNA]</scope>
    <source>
        <strain>ATCC BAA-2266 / KCTC 15142 / 195</strain>
    </source>
</reference>
<feature type="chain" id="PRO_1000022480" description="Chorismate synthase">
    <location>
        <begin position="1"/>
        <end position="364"/>
    </location>
</feature>
<feature type="binding site" evidence="1">
    <location>
        <position position="47"/>
    </location>
    <ligand>
        <name>NADP(+)</name>
        <dbReference type="ChEBI" id="CHEBI:58349"/>
    </ligand>
</feature>
<feature type="binding site" evidence="1">
    <location>
        <begin position="125"/>
        <end position="127"/>
    </location>
    <ligand>
        <name>FMN</name>
        <dbReference type="ChEBI" id="CHEBI:58210"/>
    </ligand>
</feature>
<feature type="binding site" evidence="1">
    <location>
        <position position="285"/>
    </location>
    <ligand>
        <name>FMN</name>
        <dbReference type="ChEBI" id="CHEBI:58210"/>
    </ligand>
</feature>
<feature type="binding site" evidence="1">
    <location>
        <begin position="300"/>
        <end position="304"/>
    </location>
    <ligand>
        <name>FMN</name>
        <dbReference type="ChEBI" id="CHEBI:58210"/>
    </ligand>
</feature>
<feature type="binding site" evidence="1">
    <location>
        <position position="327"/>
    </location>
    <ligand>
        <name>FMN</name>
        <dbReference type="ChEBI" id="CHEBI:58210"/>
    </ligand>
</feature>
<keyword id="KW-0028">Amino-acid biosynthesis</keyword>
<keyword id="KW-0057">Aromatic amino acid biosynthesis</keyword>
<keyword id="KW-0274">FAD</keyword>
<keyword id="KW-0285">Flavoprotein</keyword>
<keyword id="KW-0288">FMN</keyword>
<keyword id="KW-0456">Lyase</keyword>
<keyword id="KW-0521">NADP</keyword>